<proteinExistence type="inferred from homology"/>
<keyword id="KW-1185">Reference proteome</keyword>
<keyword id="KW-0687">Ribonucleoprotein</keyword>
<keyword id="KW-0689">Ribosomal protein</keyword>
<keyword id="KW-0694">RNA-binding</keyword>
<keyword id="KW-0699">rRNA-binding</keyword>
<organism>
    <name type="scientific">Francisella tularensis subsp. holarctica (strain LVS)</name>
    <dbReference type="NCBI Taxonomy" id="376619"/>
    <lineage>
        <taxon>Bacteria</taxon>
        <taxon>Pseudomonadati</taxon>
        <taxon>Pseudomonadota</taxon>
        <taxon>Gammaproteobacteria</taxon>
        <taxon>Thiotrichales</taxon>
        <taxon>Francisellaceae</taxon>
        <taxon>Francisella</taxon>
    </lineage>
</organism>
<sequence length="104" mass="11562">MYAIIKNGGKQYKVKEGEVVKLEKFDLGIGEKVEFDTVLMGQTAAGEVKIGAPTVAGAKVVGEVVEQGRHKKVKIMKFRRRKHSMKQQGHRQYFTAVKVSSISL</sequence>
<accession>Q2A2E4</accession>
<protein>
    <recommendedName>
        <fullName evidence="1">Large ribosomal subunit protein bL21</fullName>
    </recommendedName>
    <alternativeName>
        <fullName evidence="2">50S ribosomal protein L21</fullName>
    </alternativeName>
</protein>
<feature type="chain" id="PRO_0000270666" description="Large ribosomal subunit protein bL21">
    <location>
        <begin position="1"/>
        <end position="104"/>
    </location>
</feature>
<comment type="function">
    <text evidence="1">This protein binds to 23S rRNA in the presence of protein L20.</text>
</comment>
<comment type="subunit">
    <text evidence="1">Part of the 50S ribosomal subunit. Contacts protein L20.</text>
</comment>
<comment type="similarity">
    <text evidence="1">Belongs to the bacterial ribosomal protein bL21 family.</text>
</comment>
<gene>
    <name evidence="1" type="primary">rplU</name>
    <name type="ordered locus">FTL_1453</name>
</gene>
<dbReference type="EMBL" id="AM233362">
    <property type="protein sequence ID" value="CAJ79892.1"/>
    <property type="molecule type" value="Genomic_DNA"/>
</dbReference>
<dbReference type="RefSeq" id="WP_003016753.1">
    <property type="nucleotide sequence ID" value="NZ_CP009694.1"/>
</dbReference>
<dbReference type="SMR" id="Q2A2E4"/>
<dbReference type="GeneID" id="75263828"/>
<dbReference type="KEGG" id="ftl:FTL_1453"/>
<dbReference type="Proteomes" id="UP000001944">
    <property type="component" value="Chromosome"/>
</dbReference>
<dbReference type="GO" id="GO:0005737">
    <property type="term" value="C:cytoplasm"/>
    <property type="evidence" value="ECO:0007669"/>
    <property type="project" value="UniProtKB-ARBA"/>
</dbReference>
<dbReference type="GO" id="GO:1990904">
    <property type="term" value="C:ribonucleoprotein complex"/>
    <property type="evidence" value="ECO:0007669"/>
    <property type="project" value="UniProtKB-KW"/>
</dbReference>
<dbReference type="GO" id="GO:0005840">
    <property type="term" value="C:ribosome"/>
    <property type="evidence" value="ECO:0007669"/>
    <property type="project" value="UniProtKB-KW"/>
</dbReference>
<dbReference type="GO" id="GO:0019843">
    <property type="term" value="F:rRNA binding"/>
    <property type="evidence" value="ECO:0007669"/>
    <property type="project" value="UniProtKB-UniRule"/>
</dbReference>
<dbReference type="GO" id="GO:0003735">
    <property type="term" value="F:structural constituent of ribosome"/>
    <property type="evidence" value="ECO:0007669"/>
    <property type="project" value="InterPro"/>
</dbReference>
<dbReference type="GO" id="GO:0006412">
    <property type="term" value="P:translation"/>
    <property type="evidence" value="ECO:0007669"/>
    <property type="project" value="UniProtKB-UniRule"/>
</dbReference>
<dbReference type="HAMAP" id="MF_01363">
    <property type="entry name" value="Ribosomal_bL21"/>
    <property type="match status" value="1"/>
</dbReference>
<dbReference type="InterPro" id="IPR028909">
    <property type="entry name" value="bL21-like"/>
</dbReference>
<dbReference type="InterPro" id="IPR036164">
    <property type="entry name" value="bL21-like_sf"/>
</dbReference>
<dbReference type="InterPro" id="IPR001787">
    <property type="entry name" value="Ribosomal_bL21"/>
</dbReference>
<dbReference type="InterPro" id="IPR018258">
    <property type="entry name" value="Ribosomal_bL21_CS"/>
</dbReference>
<dbReference type="NCBIfam" id="TIGR00061">
    <property type="entry name" value="L21"/>
    <property type="match status" value="1"/>
</dbReference>
<dbReference type="PANTHER" id="PTHR21349">
    <property type="entry name" value="50S RIBOSOMAL PROTEIN L21"/>
    <property type="match status" value="1"/>
</dbReference>
<dbReference type="PANTHER" id="PTHR21349:SF0">
    <property type="entry name" value="LARGE RIBOSOMAL SUBUNIT PROTEIN BL21M"/>
    <property type="match status" value="1"/>
</dbReference>
<dbReference type="Pfam" id="PF00829">
    <property type="entry name" value="Ribosomal_L21p"/>
    <property type="match status" value="1"/>
</dbReference>
<dbReference type="SUPFAM" id="SSF141091">
    <property type="entry name" value="L21p-like"/>
    <property type="match status" value="1"/>
</dbReference>
<dbReference type="PROSITE" id="PS01169">
    <property type="entry name" value="RIBOSOMAL_L21"/>
    <property type="match status" value="1"/>
</dbReference>
<reference key="1">
    <citation type="submission" date="2006-03" db="EMBL/GenBank/DDBJ databases">
        <title>Complete genome sequence of Francisella tularensis LVS (Live Vaccine Strain).</title>
        <authorList>
            <person name="Chain P."/>
            <person name="Larimer F."/>
            <person name="Land M."/>
            <person name="Stilwagen S."/>
            <person name="Larsson P."/>
            <person name="Bearden S."/>
            <person name="Chu M."/>
            <person name="Oyston P."/>
            <person name="Forsman M."/>
            <person name="Andersson S."/>
            <person name="Lindler L."/>
            <person name="Titball R."/>
            <person name="Garcia E."/>
        </authorList>
    </citation>
    <scope>NUCLEOTIDE SEQUENCE [LARGE SCALE GENOMIC DNA]</scope>
    <source>
        <strain>LVS</strain>
    </source>
</reference>
<name>RL21_FRATH</name>
<evidence type="ECO:0000255" key="1">
    <source>
        <dbReference type="HAMAP-Rule" id="MF_01363"/>
    </source>
</evidence>
<evidence type="ECO:0000305" key="2"/>